<gene>
    <name evidence="1" type="primary">atpA</name>
    <name type="ordered locus">VNG_2139G</name>
</gene>
<feature type="chain" id="PRO_0000144594" description="A-type ATP synthase subunit A">
    <location>
        <begin position="1"/>
        <end position="585"/>
    </location>
</feature>
<feature type="binding site" evidence="1">
    <location>
        <begin position="235"/>
        <end position="242"/>
    </location>
    <ligand>
        <name>ATP</name>
        <dbReference type="ChEBI" id="CHEBI:30616"/>
    </ligand>
</feature>
<feature type="sequence conflict" description="In Ref. 1; CAA49775." evidence="2" ref="1">
    <original>A</original>
    <variation>G</variation>
    <location>
        <position position="305"/>
    </location>
</feature>
<feature type="sequence conflict" description="In Ref. 1; CAA49775." evidence="2" ref="1">
    <original>W</original>
    <variation>S</variation>
    <location>
        <position position="460"/>
    </location>
</feature>
<name>AATA_HALSA</name>
<reference key="1">
    <citation type="journal article" date="1991" name="Arch. Biochem. Biophys.">
        <title>The ATP synthase of Halobacterium salinarium (halobium) is an archaebacterial type as revealed from the amino acid sequences of its two major subunits.</title>
        <authorList>
            <person name="Ihara K."/>
            <person name="Mukohata Y."/>
        </authorList>
    </citation>
    <scope>NUCLEOTIDE SEQUENCE [GENOMIC DNA]</scope>
    <scope>PARTIAL PROTEIN SEQUENCE</scope>
</reference>
<reference key="2">
    <citation type="journal article" date="2000" name="Proc. Natl. Acad. Sci. U.S.A.">
        <title>Genome sequence of Halobacterium species NRC-1.</title>
        <authorList>
            <person name="Ng W.V."/>
            <person name="Kennedy S.P."/>
            <person name="Mahairas G.G."/>
            <person name="Berquist B."/>
            <person name="Pan M."/>
            <person name="Shukla H.D."/>
            <person name="Lasky S.R."/>
            <person name="Baliga N.S."/>
            <person name="Thorsson V."/>
            <person name="Sbrogna J."/>
            <person name="Swartzell S."/>
            <person name="Weir D."/>
            <person name="Hall J."/>
            <person name="Dahl T.A."/>
            <person name="Welti R."/>
            <person name="Goo Y.A."/>
            <person name="Leithauser B."/>
            <person name="Keller K."/>
            <person name="Cruz R."/>
            <person name="Danson M.J."/>
            <person name="Hough D.W."/>
            <person name="Maddocks D.G."/>
            <person name="Jablonski P.E."/>
            <person name="Krebs M.P."/>
            <person name="Angevine C.M."/>
            <person name="Dale H."/>
            <person name="Isenbarger T.A."/>
            <person name="Peck R.F."/>
            <person name="Pohlschroder M."/>
            <person name="Spudich J.L."/>
            <person name="Jung K.-H."/>
            <person name="Alam M."/>
            <person name="Freitas T."/>
            <person name="Hou S."/>
            <person name="Daniels C.J."/>
            <person name="Dennis P.P."/>
            <person name="Omer A.D."/>
            <person name="Ebhardt H."/>
            <person name="Lowe T.M."/>
            <person name="Liang P."/>
            <person name="Riley M."/>
            <person name="Hood L."/>
            <person name="DasSarma S."/>
        </authorList>
    </citation>
    <scope>NUCLEOTIDE SEQUENCE [LARGE SCALE GENOMIC DNA]</scope>
    <source>
        <strain>ATCC 700922 / JCM 11081 / NRC-1</strain>
    </source>
</reference>
<organism>
    <name type="scientific">Halobacterium salinarum (strain ATCC 700922 / JCM 11081 / NRC-1)</name>
    <name type="common">Halobacterium halobium</name>
    <dbReference type="NCBI Taxonomy" id="64091"/>
    <lineage>
        <taxon>Archaea</taxon>
        <taxon>Methanobacteriati</taxon>
        <taxon>Methanobacteriota</taxon>
        <taxon>Stenosarchaea group</taxon>
        <taxon>Halobacteria</taxon>
        <taxon>Halobacteriales</taxon>
        <taxon>Halobacteriaceae</taxon>
        <taxon>Halobacterium</taxon>
        <taxon>Halobacterium salinarum NRC-34001</taxon>
    </lineage>
</organism>
<evidence type="ECO:0000255" key="1">
    <source>
        <dbReference type="HAMAP-Rule" id="MF_00309"/>
    </source>
</evidence>
<evidence type="ECO:0000305" key="2"/>
<protein>
    <recommendedName>
        <fullName evidence="1">A-type ATP synthase subunit A</fullName>
        <ecNumber evidence="1">7.1.2.2</ecNumber>
    </recommendedName>
</protein>
<sequence>MSQAEAITDTGEIESVSGPVVTATGLDAQMNDVVYVGDEGLMGEVIEIEGDVTTIQVYEETSGIGPGQPVDNTGEPLTVDLGPGMLDSIYDGVQRPLDVLEDEMGAFLDRGVDAPGIDLDTDWEFEPTVEAGDEVAAGDVVGTVDETVSIEHKVLVPPRSDGGEVVAVESGTFTVDDTVVELDTGEEIQMHQEWPVRRQRPTVDKQTPTEPLVSGQRILDGLFPIAKGGTAAIPGPFGSGKTVTQQSLAKFADADIVVYIGCGERGNEMTEVIEDFPELPDPQTGNPLMARTTLIANTSNMPVAARESCIYTGITIAEYYRDMGYDVALMADSTSRWAEAMREISSRLEEMPGEEGYPAYLAARLSEFYERAGYFENFNGTEGSISVIGAVSPPGGDFSEPVTQNTLRIVKTFWALDSDLAERRHFPAINWDESYSLYKDQLDPWFTDNVVDDWAEQRQWAVDILDEESELEEIVQLVGKDALPEDQQLTLEVARYIREAWLQQNALHDVDRYCPPEKTYAILSGIKTLHEESFEALDAGVPVEEITSIDAAPRLNRLGTTPDDEHEAEVAEIKQQITEQLRELY</sequence>
<accession>Q9HNE3</accession>
<accession>P25163</accession>
<proteinExistence type="evidence at protein level"/>
<comment type="function">
    <text evidence="1">Component of the A-type ATP synthase that produces ATP from ADP in the presence of a proton gradient across the membrane. The A chain is the catalytic subunit.</text>
</comment>
<comment type="catalytic activity">
    <reaction evidence="1">
        <text>ATP + H2O + 4 H(+)(in) = ADP + phosphate + 5 H(+)(out)</text>
        <dbReference type="Rhea" id="RHEA:57720"/>
        <dbReference type="ChEBI" id="CHEBI:15377"/>
        <dbReference type="ChEBI" id="CHEBI:15378"/>
        <dbReference type="ChEBI" id="CHEBI:30616"/>
        <dbReference type="ChEBI" id="CHEBI:43474"/>
        <dbReference type="ChEBI" id="CHEBI:456216"/>
        <dbReference type="EC" id="7.1.2.2"/>
    </reaction>
</comment>
<comment type="subunit">
    <text evidence="1">Has multiple subunits with at least A(3), B(3), C, D, E, F, H, I and proteolipid K(x).</text>
</comment>
<comment type="subcellular location">
    <subcellularLocation>
        <location evidence="1">Cell membrane</location>
        <topology evidence="1">Peripheral membrane protein</topology>
    </subcellularLocation>
</comment>
<comment type="similarity">
    <text evidence="1">Belongs to the ATPase alpha/beta chains family.</text>
</comment>
<comment type="sequence caution" evidence="2">
    <conflict type="erroneous initiation">
        <sequence resource="EMBL-CDS" id="AAG20277"/>
    </conflict>
    <text>Truncated N-terminus.</text>
</comment>
<keyword id="KW-0066">ATP synthesis</keyword>
<keyword id="KW-0067">ATP-binding</keyword>
<keyword id="KW-1003">Cell membrane</keyword>
<keyword id="KW-0903">Direct protein sequencing</keyword>
<keyword id="KW-0375">Hydrogen ion transport</keyword>
<keyword id="KW-0406">Ion transport</keyword>
<keyword id="KW-0472">Membrane</keyword>
<keyword id="KW-0547">Nucleotide-binding</keyword>
<keyword id="KW-1185">Reference proteome</keyword>
<keyword id="KW-1278">Translocase</keyword>
<keyword id="KW-0813">Transport</keyword>
<dbReference type="EC" id="7.1.2.2" evidence="1"/>
<dbReference type="EMBL" id="X70294">
    <property type="protein sequence ID" value="CAA49775.1"/>
    <property type="molecule type" value="Genomic_DNA"/>
</dbReference>
<dbReference type="EMBL" id="AE004437">
    <property type="protein sequence ID" value="AAG20277.1"/>
    <property type="status" value="ALT_INIT"/>
    <property type="molecule type" value="Genomic_DNA"/>
</dbReference>
<dbReference type="PIR" id="A84364">
    <property type="entry name" value="A84364"/>
</dbReference>
<dbReference type="PIR" id="S14732">
    <property type="entry name" value="S14732"/>
</dbReference>
<dbReference type="RefSeq" id="WP_010903579.1">
    <property type="nucleotide sequence ID" value="NC_002607.1"/>
</dbReference>
<dbReference type="SMR" id="Q9HNE3"/>
<dbReference type="FunCoup" id="Q9HNE3">
    <property type="interactions" value="81"/>
</dbReference>
<dbReference type="STRING" id="64091.VNG_2139G"/>
<dbReference type="PaxDb" id="64091-VNG_2139G"/>
<dbReference type="KEGG" id="hal:VNG_2139G"/>
<dbReference type="PATRIC" id="fig|64091.14.peg.1637"/>
<dbReference type="HOGENOM" id="CLU_008162_3_1_2"/>
<dbReference type="InParanoid" id="Q9HNE3"/>
<dbReference type="OrthoDB" id="115235at2157"/>
<dbReference type="PhylomeDB" id="Q9HNE3"/>
<dbReference type="BioCyc" id="MetaCyc:MONOMER-681"/>
<dbReference type="Proteomes" id="UP000000554">
    <property type="component" value="Chromosome"/>
</dbReference>
<dbReference type="GO" id="GO:0005886">
    <property type="term" value="C:plasma membrane"/>
    <property type="evidence" value="ECO:0007669"/>
    <property type="project" value="UniProtKB-SubCell"/>
</dbReference>
<dbReference type="GO" id="GO:0033178">
    <property type="term" value="C:proton-transporting two-sector ATPase complex, catalytic domain"/>
    <property type="evidence" value="ECO:0007669"/>
    <property type="project" value="InterPro"/>
</dbReference>
<dbReference type="GO" id="GO:0005524">
    <property type="term" value="F:ATP binding"/>
    <property type="evidence" value="ECO:0007669"/>
    <property type="project" value="UniProtKB-UniRule"/>
</dbReference>
<dbReference type="GO" id="GO:0046933">
    <property type="term" value="F:proton-transporting ATP synthase activity, rotational mechanism"/>
    <property type="evidence" value="ECO:0007669"/>
    <property type="project" value="UniProtKB-UniRule"/>
</dbReference>
<dbReference type="GO" id="GO:0046961">
    <property type="term" value="F:proton-transporting ATPase activity, rotational mechanism"/>
    <property type="evidence" value="ECO:0000318"/>
    <property type="project" value="GO_Central"/>
</dbReference>
<dbReference type="GO" id="GO:0042777">
    <property type="term" value="P:proton motive force-driven plasma membrane ATP synthesis"/>
    <property type="evidence" value="ECO:0007669"/>
    <property type="project" value="UniProtKB-UniRule"/>
</dbReference>
<dbReference type="GO" id="GO:1902600">
    <property type="term" value="P:proton transmembrane transport"/>
    <property type="evidence" value="ECO:0000318"/>
    <property type="project" value="GO_Central"/>
</dbReference>
<dbReference type="CDD" id="cd18111">
    <property type="entry name" value="ATP-synt_V_A-type_alpha_C"/>
    <property type="match status" value="1"/>
</dbReference>
<dbReference type="CDD" id="cd18119">
    <property type="entry name" value="ATP-synt_V_A-type_alpha_N"/>
    <property type="match status" value="1"/>
</dbReference>
<dbReference type="CDD" id="cd01134">
    <property type="entry name" value="V_A-ATPase_A"/>
    <property type="match status" value="1"/>
</dbReference>
<dbReference type="FunFam" id="2.40.30.20:FF:000002">
    <property type="entry name" value="V-type proton ATPase catalytic subunit A"/>
    <property type="match status" value="1"/>
</dbReference>
<dbReference type="FunFam" id="2.40.50.100:FF:000008">
    <property type="entry name" value="V-type proton ATPase catalytic subunit A"/>
    <property type="match status" value="1"/>
</dbReference>
<dbReference type="Gene3D" id="2.40.30.20">
    <property type="match status" value="1"/>
</dbReference>
<dbReference type="Gene3D" id="2.40.50.100">
    <property type="match status" value="1"/>
</dbReference>
<dbReference type="Gene3D" id="1.10.1140.10">
    <property type="entry name" value="Bovine Mitochondrial F1-atpase, Atp Synthase Beta Chain, Chain D, domain 3"/>
    <property type="match status" value="1"/>
</dbReference>
<dbReference type="Gene3D" id="3.40.50.300">
    <property type="entry name" value="P-loop containing nucleotide triphosphate hydrolases"/>
    <property type="match status" value="1"/>
</dbReference>
<dbReference type="HAMAP" id="MF_00309">
    <property type="entry name" value="ATP_synth_A_arch"/>
    <property type="match status" value="1"/>
</dbReference>
<dbReference type="InterPro" id="IPR055190">
    <property type="entry name" value="ATP-synt_VA_C"/>
</dbReference>
<dbReference type="InterPro" id="IPR031686">
    <property type="entry name" value="ATP-synth_a_Xtn"/>
</dbReference>
<dbReference type="InterPro" id="IPR023366">
    <property type="entry name" value="ATP_synth_asu-like_sf"/>
</dbReference>
<dbReference type="InterPro" id="IPR005726">
    <property type="entry name" value="ATP_synth_asu_arc"/>
</dbReference>
<dbReference type="InterPro" id="IPR020003">
    <property type="entry name" value="ATPase_a/bsu_AS"/>
</dbReference>
<dbReference type="InterPro" id="IPR004100">
    <property type="entry name" value="ATPase_F1/V1/A1_a/bsu_N"/>
</dbReference>
<dbReference type="InterPro" id="IPR036121">
    <property type="entry name" value="ATPase_F1/V1/A1_a/bsu_N_sf"/>
</dbReference>
<dbReference type="InterPro" id="IPR000194">
    <property type="entry name" value="ATPase_F1/V1/A1_a/bsu_nucl-bd"/>
</dbReference>
<dbReference type="InterPro" id="IPR024034">
    <property type="entry name" value="ATPase_F1/V1_b/a_C"/>
</dbReference>
<dbReference type="InterPro" id="IPR027417">
    <property type="entry name" value="P-loop_NTPase"/>
</dbReference>
<dbReference type="InterPro" id="IPR022878">
    <property type="entry name" value="V-ATPase_asu"/>
</dbReference>
<dbReference type="NCBIfam" id="TIGR01043">
    <property type="entry name" value="ATP_syn_A_arch"/>
    <property type="match status" value="1"/>
</dbReference>
<dbReference type="NCBIfam" id="NF003220">
    <property type="entry name" value="PRK04192.1"/>
    <property type="match status" value="1"/>
</dbReference>
<dbReference type="PANTHER" id="PTHR43607:SF1">
    <property type="entry name" value="H(+)-TRANSPORTING TWO-SECTOR ATPASE"/>
    <property type="match status" value="1"/>
</dbReference>
<dbReference type="PANTHER" id="PTHR43607">
    <property type="entry name" value="V-TYPE PROTON ATPASE CATALYTIC SUBUNIT A"/>
    <property type="match status" value="1"/>
</dbReference>
<dbReference type="Pfam" id="PF00006">
    <property type="entry name" value="ATP-synt_ab"/>
    <property type="match status" value="1"/>
</dbReference>
<dbReference type="Pfam" id="PF02874">
    <property type="entry name" value="ATP-synt_ab_N"/>
    <property type="match status" value="1"/>
</dbReference>
<dbReference type="Pfam" id="PF16886">
    <property type="entry name" value="ATP-synt_ab_Xtn"/>
    <property type="match status" value="1"/>
</dbReference>
<dbReference type="Pfam" id="PF22919">
    <property type="entry name" value="ATP-synt_VA_C"/>
    <property type="match status" value="1"/>
</dbReference>
<dbReference type="SUPFAM" id="SSF47917">
    <property type="entry name" value="C-terminal domain of alpha and beta subunits of F1 ATP synthase"/>
    <property type="match status" value="1"/>
</dbReference>
<dbReference type="SUPFAM" id="SSF50615">
    <property type="entry name" value="N-terminal domain of alpha and beta subunits of F1 ATP synthase"/>
    <property type="match status" value="1"/>
</dbReference>
<dbReference type="SUPFAM" id="SSF52540">
    <property type="entry name" value="P-loop containing nucleoside triphosphate hydrolases"/>
    <property type="match status" value="1"/>
</dbReference>
<dbReference type="PROSITE" id="PS00152">
    <property type="entry name" value="ATPASE_ALPHA_BETA"/>
    <property type="match status" value="1"/>
</dbReference>